<name>DEF_ALIFM</name>
<sequence length="170" mass="18997">MALLEVLTFPDDRLRTVAKPVEAVTPEIQKFVDDMIETMYDEEGIGLAATQVDFHQRIVVIDVSETRDEPMVLINPVITQKSGDDGIEEGCLSVPGAKGLVPRSAEVSVSALDRDGNEFSFDADDLLAICVQHELDHLDGKLFVDYLSPLKRKRIKEKLEKIKKFNAKNQ</sequence>
<evidence type="ECO:0000255" key="1">
    <source>
        <dbReference type="HAMAP-Rule" id="MF_00163"/>
    </source>
</evidence>
<proteinExistence type="inferred from homology"/>
<dbReference type="EC" id="3.5.1.88" evidence="1"/>
<dbReference type="EMBL" id="CP001139">
    <property type="protein sequence ID" value="ACH65039.1"/>
    <property type="molecule type" value="Genomic_DNA"/>
</dbReference>
<dbReference type="RefSeq" id="WP_011262885.1">
    <property type="nucleotide sequence ID" value="NC_011184.1"/>
</dbReference>
<dbReference type="SMR" id="B5FCW6"/>
<dbReference type="GeneID" id="54165293"/>
<dbReference type="KEGG" id="vfm:VFMJ11_2674"/>
<dbReference type="HOGENOM" id="CLU_061901_2_1_6"/>
<dbReference type="Proteomes" id="UP000001857">
    <property type="component" value="Chromosome I"/>
</dbReference>
<dbReference type="GO" id="GO:0046872">
    <property type="term" value="F:metal ion binding"/>
    <property type="evidence" value="ECO:0007669"/>
    <property type="project" value="UniProtKB-KW"/>
</dbReference>
<dbReference type="GO" id="GO:0042586">
    <property type="term" value="F:peptide deformylase activity"/>
    <property type="evidence" value="ECO:0007669"/>
    <property type="project" value="UniProtKB-UniRule"/>
</dbReference>
<dbReference type="GO" id="GO:0043686">
    <property type="term" value="P:co-translational protein modification"/>
    <property type="evidence" value="ECO:0007669"/>
    <property type="project" value="TreeGrafter"/>
</dbReference>
<dbReference type="GO" id="GO:0006412">
    <property type="term" value="P:translation"/>
    <property type="evidence" value="ECO:0007669"/>
    <property type="project" value="UniProtKB-UniRule"/>
</dbReference>
<dbReference type="CDD" id="cd00487">
    <property type="entry name" value="Pep_deformylase"/>
    <property type="match status" value="1"/>
</dbReference>
<dbReference type="FunFam" id="3.90.45.10:FF:000001">
    <property type="entry name" value="Peptide deformylase"/>
    <property type="match status" value="1"/>
</dbReference>
<dbReference type="Gene3D" id="3.90.45.10">
    <property type="entry name" value="Peptide deformylase"/>
    <property type="match status" value="1"/>
</dbReference>
<dbReference type="HAMAP" id="MF_00163">
    <property type="entry name" value="Pep_deformylase"/>
    <property type="match status" value="1"/>
</dbReference>
<dbReference type="InterPro" id="IPR023635">
    <property type="entry name" value="Peptide_deformylase"/>
</dbReference>
<dbReference type="InterPro" id="IPR036821">
    <property type="entry name" value="Peptide_deformylase_sf"/>
</dbReference>
<dbReference type="NCBIfam" id="TIGR00079">
    <property type="entry name" value="pept_deformyl"/>
    <property type="match status" value="1"/>
</dbReference>
<dbReference type="NCBIfam" id="NF001159">
    <property type="entry name" value="PRK00150.1-3"/>
    <property type="match status" value="1"/>
</dbReference>
<dbReference type="PANTHER" id="PTHR10458">
    <property type="entry name" value="PEPTIDE DEFORMYLASE"/>
    <property type="match status" value="1"/>
</dbReference>
<dbReference type="PANTHER" id="PTHR10458:SF21">
    <property type="entry name" value="PEPTIDE DEFORMYLASE"/>
    <property type="match status" value="1"/>
</dbReference>
<dbReference type="Pfam" id="PF01327">
    <property type="entry name" value="Pep_deformylase"/>
    <property type="match status" value="1"/>
</dbReference>
<dbReference type="PIRSF" id="PIRSF004749">
    <property type="entry name" value="Pep_def"/>
    <property type="match status" value="1"/>
</dbReference>
<dbReference type="PRINTS" id="PR01576">
    <property type="entry name" value="PDEFORMYLASE"/>
</dbReference>
<dbReference type="SUPFAM" id="SSF56420">
    <property type="entry name" value="Peptide deformylase"/>
    <property type="match status" value="1"/>
</dbReference>
<gene>
    <name evidence="1" type="primary">def</name>
    <name type="ordered locus">VFMJ11_2674</name>
</gene>
<reference key="1">
    <citation type="submission" date="2008-08" db="EMBL/GenBank/DDBJ databases">
        <title>Complete sequence of Vibrio fischeri strain MJ11.</title>
        <authorList>
            <person name="Mandel M.J."/>
            <person name="Stabb E.V."/>
            <person name="Ruby E.G."/>
            <person name="Ferriera S."/>
            <person name="Johnson J."/>
            <person name="Kravitz S."/>
            <person name="Beeson K."/>
            <person name="Sutton G."/>
            <person name="Rogers Y.-H."/>
            <person name="Friedman R."/>
            <person name="Frazier M."/>
            <person name="Venter J.C."/>
        </authorList>
    </citation>
    <scope>NUCLEOTIDE SEQUENCE [LARGE SCALE GENOMIC DNA]</scope>
    <source>
        <strain>MJ11</strain>
    </source>
</reference>
<feature type="chain" id="PRO_1000097359" description="Peptide deformylase">
    <location>
        <begin position="1"/>
        <end position="170"/>
    </location>
</feature>
<feature type="active site" evidence="1">
    <location>
        <position position="134"/>
    </location>
</feature>
<feature type="binding site" evidence="1">
    <location>
        <position position="91"/>
    </location>
    <ligand>
        <name>Fe cation</name>
        <dbReference type="ChEBI" id="CHEBI:24875"/>
    </ligand>
</feature>
<feature type="binding site" evidence="1">
    <location>
        <position position="133"/>
    </location>
    <ligand>
        <name>Fe cation</name>
        <dbReference type="ChEBI" id="CHEBI:24875"/>
    </ligand>
</feature>
<feature type="binding site" evidence="1">
    <location>
        <position position="137"/>
    </location>
    <ligand>
        <name>Fe cation</name>
        <dbReference type="ChEBI" id="CHEBI:24875"/>
    </ligand>
</feature>
<protein>
    <recommendedName>
        <fullName evidence="1">Peptide deformylase</fullName>
        <shortName evidence="1">PDF</shortName>
        <ecNumber evidence="1">3.5.1.88</ecNumber>
    </recommendedName>
    <alternativeName>
        <fullName evidence="1">Polypeptide deformylase</fullName>
    </alternativeName>
</protein>
<accession>B5FCW6</accession>
<comment type="function">
    <text evidence="1">Removes the formyl group from the N-terminal Met of newly synthesized proteins. Requires at least a dipeptide for an efficient rate of reaction. N-terminal L-methionine is a prerequisite for activity but the enzyme has broad specificity at other positions.</text>
</comment>
<comment type="catalytic activity">
    <reaction evidence="1">
        <text>N-terminal N-formyl-L-methionyl-[peptide] + H2O = N-terminal L-methionyl-[peptide] + formate</text>
        <dbReference type="Rhea" id="RHEA:24420"/>
        <dbReference type="Rhea" id="RHEA-COMP:10639"/>
        <dbReference type="Rhea" id="RHEA-COMP:10640"/>
        <dbReference type="ChEBI" id="CHEBI:15377"/>
        <dbReference type="ChEBI" id="CHEBI:15740"/>
        <dbReference type="ChEBI" id="CHEBI:49298"/>
        <dbReference type="ChEBI" id="CHEBI:64731"/>
        <dbReference type="EC" id="3.5.1.88"/>
    </reaction>
</comment>
<comment type="cofactor">
    <cofactor evidence="1">
        <name>Fe(2+)</name>
        <dbReference type="ChEBI" id="CHEBI:29033"/>
    </cofactor>
    <text evidence="1">Binds 1 Fe(2+) ion.</text>
</comment>
<comment type="similarity">
    <text evidence="1">Belongs to the polypeptide deformylase family.</text>
</comment>
<organism>
    <name type="scientific">Aliivibrio fischeri (strain MJ11)</name>
    <name type="common">Vibrio fischeri</name>
    <dbReference type="NCBI Taxonomy" id="388396"/>
    <lineage>
        <taxon>Bacteria</taxon>
        <taxon>Pseudomonadati</taxon>
        <taxon>Pseudomonadota</taxon>
        <taxon>Gammaproteobacteria</taxon>
        <taxon>Vibrionales</taxon>
        <taxon>Vibrionaceae</taxon>
        <taxon>Aliivibrio</taxon>
    </lineage>
</organism>
<keyword id="KW-0378">Hydrolase</keyword>
<keyword id="KW-0408">Iron</keyword>
<keyword id="KW-0479">Metal-binding</keyword>
<keyword id="KW-0648">Protein biosynthesis</keyword>